<sequence>MLKFYKMGIKRLSGEMTMGEERMDLGIEFETTEEIPVPERLIDQVIGQDHAVEVIKTAAKQRRHVLLIGEPGTGKSMLGQAMAELLPTEDLEDILVFPNPEDENMPRIKTVPAGQGRRIVEEYKRKAKEQENIRFYLLFFVFFIVAMAVFMSRGDPNTLLLGVFVILIALMVTANMRFRTQAMVPKLLVDNSGRKRAPFVDATGAHAGALLGDVRHDPFQCFSGEETVVIRENGEVKVLRLKDFVEKALEKPSGEGLDGDVKVVYHDFRNENVEVLTKDGFTKLLYANKRIGKQKLRRVVNLEKDYWFALTPDHKVYTTDGLKEAGEITEKDELISVPITVFDCEDEDLKKIGLLPLTSDDERLRKIATLMGILFNGGSIDEGLGVLTLKSERSVIEKFVITLKELFGKFEYEIIKEENTILKTRDPRIIKFLVGLGAPIEGKDLKMPWWVKLKPSLFLAFLEGFRAHIVEQLVDDPNKNLPFFQELSWYLGLFGIKADIKVEEVGDKHKIIFDAGRLDVDKQFIETWEDVEVTYNLTTEKGNLLANGLFVKNSGGLGTPAHLRVEPGMIHRAHKGVLFIDEIATLSLKMQQSLLTAMQEKKFPITGQSELSSGAMVRTEPVPCDFILVAAGNLDTIEKMHPALRSRIRGYGYEVYMRTTMPDTVENRRKLVQFVAQEVKKDGRIPHFTRDAVEEIIREAQRRAGRKGHLTLRLRDLGGVVRAAGDIAVRKGKKYVTREDVLEALQMAKPLEKQLADWYIERKKEYQVIRTEGGEIGRVNGLAIIGEQSGIVLPIEAIVAPAASKEEGKIIVTGKLGEIAREAVLNVSAIIKRYKGEDISRYDIHVQFLQTYEGVEGDSASISVATAVISALEEIPVRQDVAMTGSLSVRGEVLPVGGVTPKIEAAIEAGIKKVIIPKANEKDVFLSPDKREKIEIIPVERIDEVLEVALVESEKKKELIKRIRETLPLGVSESAGSETLHEHGRDSGSALSVEESKA</sequence>
<evidence type="ECO:0000250" key="1"/>
<evidence type="ECO:0000255" key="2"/>
<evidence type="ECO:0000255" key="3">
    <source>
        <dbReference type="PROSITE-ProRule" id="PRU00273"/>
    </source>
</evidence>
<evidence type="ECO:0000255" key="4">
    <source>
        <dbReference type="PROSITE-ProRule" id="PRU01122"/>
    </source>
</evidence>
<evidence type="ECO:0000256" key="5">
    <source>
        <dbReference type="SAM" id="MobiDB-lite"/>
    </source>
</evidence>
<evidence type="ECO:0000305" key="6"/>
<proteinExistence type="inferred from homology"/>
<feature type="chain" id="PRO_0000026726" description="Archaeal Lon protease, 1st part" evidence="2">
    <location>
        <begin position="1"/>
        <end position="220"/>
    </location>
</feature>
<feature type="chain" id="PRO_0000026727" description="Pab lon intein" evidence="2">
    <location>
        <begin position="221"/>
        <end position="553"/>
    </location>
</feature>
<feature type="chain" id="PRO_0000026728" description="Archaeal Lon protease, 2nd part" evidence="2">
    <location>
        <begin position="554"/>
        <end position="998"/>
    </location>
</feature>
<feature type="topological domain" description="Cytoplasmic" evidence="2">
    <location>
        <begin position="1"/>
        <end position="131"/>
    </location>
</feature>
<feature type="transmembrane region" description="Helical" evidence="2">
    <location>
        <begin position="132"/>
        <end position="152"/>
    </location>
</feature>
<feature type="topological domain" description="Extracellular" evidence="2">
    <location>
        <begin position="153"/>
        <end position="155"/>
    </location>
</feature>
<feature type="transmembrane region" description="Helical" evidence="2">
    <location>
        <begin position="156"/>
        <end position="176"/>
    </location>
</feature>
<feature type="topological domain" description="Cytoplasmic" evidence="2">
    <location>
        <begin position="177"/>
        <end position="998"/>
    </location>
</feature>
<feature type="domain" description="DOD-type homing endonuclease" evidence="3">
    <location>
        <begin position="370"/>
        <end position="496"/>
    </location>
</feature>
<feature type="domain" description="Lon proteolytic" evidence="4">
    <location>
        <begin position="773"/>
        <end position="952"/>
    </location>
</feature>
<feature type="region of interest" description="Disordered" evidence="5">
    <location>
        <begin position="971"/>
        <end position="998"/>
    </location>
</feature>
<feature type="active site" evidence="1">
    <location>
        <position position="859"/>
    </location>
</feature>
<feature type="active site" evidence="1">
    <location>
        <position position="902"/>
    </location>
</feature>
<feature type="binding site" evidence="2">
    <location>
        <begin position="69"/>
        <end position="76"/>
    </location>
    <ligand>
        <name>ATP</name>
        <dbReference type="ChEBI" id="CHEBI:30616"/>
    </ligand>
</feature>
<organism>
    <name type="scientific">Pyrococcus abyssi (strain GE5 / Orsay)</name>
    <dbReference type="NCBI Taxonomy" id="272844"/>
    <lineage>
        <taxon>Archaea</taxon>
        <taxon>Methanobacteriati</taxon>
        <taxon>Methanobacteriota</taxon>
        <taxon>Thermococci</taxon>
        <taxon>Thermococcales</taxon>
        <taxon>Thermococcaceae</taxon>
        <taxon>Pyrococcus</taxon>
    </lineage>
</organism>
<keyword id="KW-0067">ATP-binding</keyword>
<keyword id="KW-0068">Autocatalytic cleavage</keyword>
<keyword id="KW-1003">Cell membrane</keyword>
<keyword id="KW-0255">Endonuclease</keyword>
<keyword id="KW-0378">Hydrolase</keyword>
<keyword id="KW-0404">Intron homing</keyword>
<keyword id="KW-0472">Membrane</keyword>
<keyword id="KW-0540">Nuclease</keyword>
<keyword id="KW-0547">Nucleotide-binding</keyword>
<keyword id="KW-0645">Protease</keyword>
<keyword id="KW-0651">Protein splicing</keyword>
<keyword id="KW-0720">Serine protease</keyword>
<keyword id="KW-0812">Transmembrane</keyword>
<keyword id="KW-1133">Transmembrane helix</keyword>
<dbReference type="EC" id="3.4.21.-"/>
<dbReference type="EMBL" id="AJ248288">
    <property type="protein sequence ID" value="CAB50486.1"/>
    <property type="molecule type" value="Genomic_DNA"/>
</dbReference>
<dbReference type="EMBL" id="HE613800">
    <property type="protein sequence ID" value="CCE71040.1"/>
    <property type="molecule type" value="Genomic_DNA"/>
</dbReference>
<dbReference type="PIR" id="H75005">
    <property type="entry name" value="H75005"/>
</dbReference>
<dbReference type="SMR" id="Q9UYC6"/>
<dbReference type="STRING" id="272844.PAB1313"/>
<dbReference type="MEROPS" id="S16.005"/>
<dbReference type="KEGG" id="pab:PAB1313"/>
<dbReference type="PATRIC" id="fig|272844.11.peg.1687"/>
<dbReference type="eggNOG" id="arCOG02160">
    <property type="taxonomic scope" value="Archaea"/>
</dbReference>
<dbReference type="eggNOG" id="arCOG03158">
    <property type="taxonomic scope" value="Archaea"/>
</dbReference>
<dbReference type="HOGENOM" id="CLU_281280_0_0_2"/>
<dbReference type="PhylomeDB" id="Q9UYC6"/>
<dbReference type="Proteomes" id="UP000000810">
    <property type="component" value="Chromosome"/>
</dbReference>
<dbReference type="Proteomes" id="UP000009139">
    <property type="component" value="Chromosome"/>
</dbReference>
<dbReference type="GO" id="GO:0005886">
    <property type="term" value="C:plasma membrane"/>
    <property type="evidence" value="ECO:0007669"/>
    <property type="project" value="UniProtKB-SubCell"/>
</dbReference>
<dbReference type="GO" id="GO:0005524">
    <property type="term" value="F:ATP binding"/>
    <property type="evidence" value="ECO:0007669"/>
    <property type="project" value="UniProtKB-KW"/>
</dbReference>
<dbReference type="GO" id="GO:0004176">
    <property type="term" value="F:ATP-dependent peptidase activity"/>
    <property type="evidence" value="ECO:0007669"/>
    <property type="project" value="InterPro"/>
</dbReference>
<dbReference type="GO" id="GO:0004519">
    <property type="term" value="F:endonuclease activity"/>
    <property type="evidence" value="ECO:0007669"/>
    <property type="project" value="UniProtKB-KW"/>
</dbReference>
<dbReference type="GO" id="GO:0004252">
    <property type="term" value="F:serine-type endopeptidase activity"/>
    <property type="evidence" value="ECO:0007669"/>
    <property type="project" value="InterPro"/>
</dbReference>
<dbReference type="GO" id="GO:0016539">
    <property type="term" value="P:intein-mediated protein splicing"/>
    <property type="evidence" value="ECO:0007669"/>
    <property type="project" value="InterPro"/>
</dbReference>
<dbReference type="GO" id="GO:0006314">
    <property type="term" value="P:intron homing"/>
    <property type="evidence" value="ECO:0007669"/>
    <property type="project" value="UniProtKB-KW"/>
</dbReference>
<dbReference type="GO" id="GO:0030163">
    <property type="term" value="P:protein catabolic process"/>
    <property type="evidence" value="ECO:0007669"/>
    <property type="project" value="InterPro"/>
</dbReference>
<dbReference type="GO" id="GO:0006355">
    <property type="term" value="P:regulation of DNA-templated transcription"/>
    <property type="evidence" value="ECO:0007669"/>
    <property type="project" value="InterPro"/>
</dbReference>
<dbReference type="CDD" id="cd00009">
    <property type="entry name" value="AAA"/>
    <property type="match status" value="1"/>
</dbReference>
<dbReference type="CDD" id="cd00081">
    <property type="entry name" value="Hint"/>
    <property type="match status" value="1"/>
</dbReference>
<dbReference type="Gene3D" id="1.10.8.60">
    <property type="match status" value="1"/>
</dbReference>
<dbReference type="Gene3D" id="3.30.230.10">
    <property type="match status" value="1"/>
</dbReference>
<dbReference type="Gene3D" id="2.170.16.10">
    <property type="entry name" value="Hedgehog/Intein (Hint) domain"/>
    <property type="match status" value="1"/>
</dbReference>
<dbReference type="Gene3D" id="3.40.50.300">
    <property type="entry name" value="P-loop containing nucleotide triphosphate hydrolases"/>
    <property type="match status" value="2"/>
</dbReference>
<dbReference type="InterPro" id="IPR003587">
    <property type="entry name" value="Hint_dom_N"/>
</dbReference>
<dbReference type="InterPro" id="IPR036844">
    <property type="entry name" value="Hint_dom_sf"/>
</dbReference>
<dbReference type="InterPro" id="IPR030934">
    <property type="entry name" value="Intein_C"/>
</dbReference>
<dbReference type="InterPro" id="IPR004042">
    <property type="entry name" value="Intein_endonuc_central"/>
</dbReference>
<dbReference type="InterPro" id="IPR006141">
    <property type="entry name" value="Intein_N"/>
</dbReference>
<dbReference type="InterPro" id="IPR004663">
    <property type="entry name" value="Lon_arc"/>
</dbReference>
<dbReference type="InterPro" id="IPR008269">
    <property type="entry name" value="Lon_proteolytic"/>
</dbReference>
<dbReference type="InterPro" id="IPR027065">
    <property type="entry name" value="Lon_Prtase"/>
</dbReference>
<dbReference type="InterPro" id="IPR046843">
    <property type="entry name" value="LonB_AAA-LID"/>
</dbReference>
<dbReference type="InterPro" id="IPR000523">
    <property type="entry name" value="Mg_chelatse_chII-like_cat_dom"/>
</dbReference>
<dbReference type="InterPro" id="IPR027417">
    <property type="entry name" value="P-loop_NTPase"/>
</dbReference>
<dbReference type="InterPro" id="IPR020568">
    <property type="entry name" value="Ribosomal_Su5_D2-typ_SF"/>
</dbReference>
<dbReference type="InterPro" id="IPR014721">
    <property type="entry name" value="Ribsml_uS5_D2-typ_fold_subgr"/>
</dbReference>
<dbReference type="InterPro" id="IPR002078">
    <property type="entry name" value="Sigma_54_int"/>
</dbReference>
<dbReference type="NCBIfam" id="TIGR01445">
    <property type="entry name" value="intein_Nterm"/>
    <property type="match status" value="1"/>
</dbReference>
<dbReference type="NCBIfam" id="TIGR00764">
    <property type="entry name" value="lon_rel"/>
    <property type="match status" value="1"/>
</dbReference>
<dbReference type="PANTHER" id="PTHR10046">
    <property type="entry name" value="ATP DEPENDENT LON PROTEASE FAMILY MEMBER"/>
    <property type="match status" value="1"/>
</dbReference>
<dbReference type="Pfam" id="PF05362">
    <property type="entry name" value="Lon_C"/>
    <property type="match status" value="1"/>
</dbReference>
<dbReference type="Pfam" id="PF20436">
    <property type="entry name" value="LonB_AAA-LID"/>
    <property type="match status" value="1"/>
</dbReference>
<dbReference type="Pfam" id="PF01078">
    <property type="entry name" value="Mg_chelatase"/>
    <property type="match status" value="1"/>
</dbReference>
<dbReference type="Pfam" id="PF00158">
    <property type="entry name" value="Sigma54_activat"/>
    <property type="match status" value="1"/>
</dbReference>
<dbReference type="PRINTS" id="PR00830">
    <property type="entry name" value="ENDOLAPTASE"/>
</dbReference>
<dbReference type="SMART" id="SM00306">
    <property type="entry name" value="HintN"/>
    <property type="match status" value="1"/>
</dbReference>
<dbReference type="SUPFAM" id="SSF51294">
    <property type="entry name" value="Hedgehog/intein (Hint) domain"/>
    <property type="match status" value="1"/>
</dbReference>
<dbReference type="SUPFAM" id="SSF52540">
    <property type="entry name" value="P-loop containing nucleoside triphosphate hydrolases"/>
    <property type="match status" value="1"/>
</dbReference>
<dbReference type="SUPFAM" id="SSF54211">
    <property type="entry name" value="Ribosomal protein S5 domain 2-like"/>
    <property type="match status" value="1"/>
</dbReference>
<dbReference type="PROSITE" id="PS50818">
    <property type="entry name" value="INTEIN_C_TER"/>
    <property type="match status" value="1"/>
</dbReference>
<dbReference type="PROSITE" id="PS50819">
    <property type="entry name" value="INTEIN_ENDONUCLEASE"/>
    <property type="match status" value="1"/>
</dbReference>
<dbReference type="PROSITE" id="PS50817">
    <property type="entry name" value="INTEIN_N_TER"/>
    <property type="match status" value="1"/>
</dbReference>
<dbReference type="PROSITE" id="PS51786">
    <property type="entry name" value="LON_PROTEOLYTIC"/>
    <property type="match status" value="1"/>
</dbReference>
<name>LONB_PYRAB</name>
<comment type="function">
    <text evidence="1">ATP-dependent serine protease that mediates the selective degradation of mutant and abnormal proteins as well as certain short-lived regulatory proteins. Degrades polypeptides processively (By similarity).</text>
</comment>
<comment type="subunit">
    <text evidence="1">Homohexamer. Organized in a ring with a central cavity (By similarity).</text>
</comment>
<comment type="subcellular location">
    <subcellularLocation>
        <location evidence="1">Cell membrane</location>
        <topology evidence="6">Multi-pass membrane protein</topology>
    </subcellularLocation>
</comment>
<comment type="PTM">
    <text evidence="6">This protein undergoes a protein self splicing that involves a post-translational excision of the intervening region (intein) followed by peptide ligation.</text>
</comment>
<comment type="similarity">
    <text evidence="6">Belongs to the peptidase S16 family. Archaeal LonB subfamily.</text>
</comment>
<accession>Q9UYC6</accession>
<accession>G8ZJ07</accession>
<protein>
    <recommendedName>
        <fullName>Archaeal Lon protease</fullName>
        <ecNumber>3.4.21.-</ecNumber>
    </recommendedName>
    <alternativeName>
        <fullName>ATP-dependent protease La homolog</fullName>
    </alternativeName>
    <component>
        <recommendedName>
            <fullName>Pab lon intein</fullName>
        </recommendedName>
    </component>
</protein>
<gene>
    <name type="primary">lon</name>
    <name type="ordered locus">PYRAB15820</name>
    <name type="ORF">PAB1313</name>
</gene>
<reference key="1">
    <citation type="journal article" date="2003" name="Mol. Microbiol.">
        <title>An integrated analysis of the genome of the hyperthermophilic archaeon Pyrococcus abyssi.</title>
        <authorList>
            <person name="Cohen G.N."/>
            <person name="Barbe V."/>
            <person name="Flament D."/>
            <person name="Galperin M."/>
            <person name="Heilig R."/>
            <person name="Lecompte O."/>
            <person name="Poch O."/>
            <person name="Prieur D."/>
            <person name="Querellou J."/>
            <person name="Ripp R."/>
            <person name="Thierry J.-C."/>
            <person name="Van der Oost J."/>
            <person name="Weissenbach J."/>
            <person name="Zivanovic Y."/>
            <person name="Forterre P."/>
        </authorList>
    </citation>
    <scope>NUCLEOTIDE SEQUENCE [LARGE SCALE GENOMIC DNA]</scope>
    <source>
        <strain>GE5 / Orsay</strain>
    </source>
</reference>
<reference key="2">
    <citation type="journal article" date="2012" name="Curr. Microbiol.">
        <title>Re-annotation of two hyperthermophilic archaea Pyrococcus abyssi GE5 and Pyrococcus furiosus DSM 3638.</title>
        <authorList>
            <person name="Gao J."/>
            <person name="Wang J."/>
        </authorList>
    </citation>
    <scope>GENOME REANNOTATION</scope>
    <source>
        <strain>GE5 / Orsay</strain>
    </source>
</reference>